<protein>
    <recommendedName>
        <fullName>Papaya proteinase 4</fullName>
        <ecNumber evidence="5">3.4.22.25</ecNumber>
    </recommendedName>
    <alternativeName>
        <fullName>Glycyl endopeptidase</fullName>
    </alternativeName>
    <alternativeName>
        <fullName>Papaya peptidase B</fullName>
    </alternativeName>
    <alternativeName>
        <fullName>Papaya proteinase IV</fullName>
        <shortName>PPIV</shortName>
    </alternativeName>
</protein>
<reference key="1">
    <citation type="journal article" date="1995" name="Protein Eng.">
        <title>Recombinant pro-regions from papain and papaya proteinase IV-are selective high affinity inhibitors of the mature papaya enzymes.</title>
        <authorList>
            <person name="Taylor M.A."/>
            <person name="Baker K.C."/>
            <person name="Briggs G.S."/>
            <person name="Connerton I.F."/>
            <person name="Cummings N.J."/>
            <person name="Pratt K.A."/>
            <person name="Revell D.F."/>
            <person name="Freedman R.B."/>
            <person name="Goodenough P.W."/>
        </authorList>
    </citation>
    <scope>NUCLEOTIDE SEQUENCE [MRNA]</scope>
    <source>
        <tissue>Leaf</tissue>
    </source>
</reference>
<reference key="2">
    <citation type="journal article" date="1989" name="FEBS Lett.">
        <title>Papaya proteinase IV amino acid sequence.</title>
        <authorList>
            <person name="Ritonja A."/>
            <person name="Buttle D.J."/>
            <person name="Rawlings N.D."/>
            <person name="Turk V."/>
            <person name="Barrett A.J."/>
        </authorList>
    </citation>
    <scope>PROTEIN SEQUENCE OF 133-348</scope>
</reference>
<reference key="3">
    <citation type="journal article" date="1979" name="Biochim. Biophys. Acta">
        <title>N-terminal homology in three cysteinyl proteases from Papaya latex.</title>
        <authorList>
            <person name="Lynn K.R."/>
            <person name="Yaguchi M."/>
        </authorList>
    </citation>
    <scope>PROTEIN SEQUENCE OF 133-150</scope>
</reference>
<reference key="4">
    <citation type="journal article" date="1986" name="Biochem. J.">
        <title>Molecular cloning of two cysteine proteinases from paw-paw (Carica papaya).</title>
        <authorList>
            <person name="McKee R.A."/>
            <person name="Adams S."/>
            <person name="Matthews J.A."/>
            <person name="Smith C.J."/>
            <person name="Smith H."/>
        </authorList>
    </citation>
    <scope>NUCLEOTIDE SEQUENCE [MRNA] OF 287-348</scope>
</reference>
<reference key="5">
    <citation type="journal article" date="1990" name="FEBS Lett.">
        <title>Selective cleavage of glycyl bonds by papaya proteinase IV.</title>
        <authorList>
            <person name="Buttle D.J."/>
            <person name="Ritonja A."/>
            <person name="Pearl L.H."/>
            <person name="Turk V."/>
            <person name="Barrett A.J."/>
        </authorList>
    </citation>
    <scope>FUNCTION</scope>
    <scope>SUBSTRATE SPECIFICITY</scope>
    <scope>CATALYTIC ACTIVITY</scope>
    <scope>BIOPHYSICOCHEMICAL PROPERTIES</scope>
</reference>
<reference key="6">
    <citation type="journal article" date="1995" name="Biochemistry">
        <title>Crystal structure of glycyl endopeptidase from Carica papaya: a cysteine endopeptidase of unusual substrate specificity.</title>
        <authorList>
            <person name="O'Hara B.P."/>
            <person name="Hemmings A.M."/>
            <person name="Buttle D.J."/>
            <person name="Pearl L.H."/>
        </authorList>
    </citation>
    <scope>X-RAY CRYSTALLOGRAPHY (2.10 ANGSTROMS) OF 133-348</scope>
    <scope>DISULFIDE BONDS</scope>
</reference>
<sequence length="348" mass="39024">MAIICSFSKLLFVAICLFGHMSLSYCDFSIVGYSQDDLTSTERLIQLFNSWMLKHNKNYKNVDEKLYRFEIFKDNLKYIDERNKMINGYWLGLNEFSDLSNDEFKEKYVGSLPEDYTNQPYDEEFVNEDIVDLPESVDWRAKGAVTPVKHQGYCESCWAFSTVATVEGINKIKTGNLVELSEQELVDCDKQSYGCNRGYQSTSLQYVAQNGIHLRAKYPYIAKQQTCRANQVGGPKVKTNGVGRVQSNNEGSLLNAIAHQPVSVVVESAGRDFQNYKGGIFEGSCGTKVDHAVTAVGYGKSGGKGYILIKNSWGPGWGENGYIRIRRASGNSPGVCGVYRSSYYPIKN</sequence>
<comment type="function">
    <text evidence="5">Thiol protease with a substrate specificity very different from the other thiol proteases.</text>
</comment>
<comment type="catalytic activity">
    <reaction evidence="5">
        <text>Preferential cleavage: Gly-|-Xaa, in proteins and in small molecule substrates.</text>
        <dbReference type="EC" id="3.4.22.25"/>
    </reaction>
</comment>
<comment type="activity regulation">
    <text>Not inhibited by cystatin.</text>
</comment>
<comment type="biophysicochemical properties">
    <kinetics>
        <KM evidence="5">5.2 mM for Boc-Ala-Ala-Gly-NHPhNO(2)</KM>
        <KM evidence="5">0.16 mM for Boc-Ala-Ala-Gly-NHMec</KM>
        <KM evidence="5">0.08 mM for Boc-Ala-Ala-Ala-NHMec</KM>
        <text evidence="5">kcat is 22 sec(-1) with Boc-Ala-Ala-Gly-NHPhNO(2) as substrate (PubMed:2404797). kcat is 5 sec(-1) with Boc-Ala-Ala-Gly-NHMec as substrate (PubMed:2404797). kcat is 0.08 sec(-1) with Boc-Ala-Ala-Ala-NHMec as substrate (PubMed:2404797).</text>
    </kinetics>
</comment>
<comment type="miscellaneous">
    <text>Substitution of the conserved Gly residue by Glu-155 could possibly explain the unusual specificity.</text>
</comment>
<comment type="similarity">
    <text evidence="2 3 4">Belongs to the peptidase C1 family.</text>
</comment>
<organism>
    <name type="scientific">Carica papaya</name>
    <name type="common">Papaya</name>
    <dbReference type="NCBI Taxonomy" id="3649"/>
    <lineage>
        <taxon>Eukaryota</taxon>
        <taxon>Viridiplantae</taxon>
        <taxon>Streptophyta</taxon>
        <taxon>Embryophyta</taxon>
        <taxon>Tracheophyta</taxon>
        <taxon>Spermatophyta</taxon>
        <taxon>Magnoliopsida</taxon>
        <taxon>eudicotyledons</taxon>
        <taxon>Gunneridae</taxon>
        <taxon>Pentapetalae</taxon>
        <taxon>rosids</taxon>
        <taxon>malvids</taxon>
        <taxon>Brassicales</taxon>
        <taxon>Caricaceae</taxon>
        <taxon>Carica</taxon>
    </lineage>
</organism>
<keyword id="KW-0002">3D-structure</keyword>
<keyword id="KW-0903">Direct protein sequencing</keyword>
<keyword id="KW-1015">Disulfide bond</keyword>
<keyword id="KW-0378">Hydrolase</keyword>
<keyword id="KW-0645">Protease</keyword>
<keyword id="KW-0732">Signal</keyword>
<keyword id="KW-0788">Thiol protease</keyword>
<keyword id="KW-0865">Zymogen</keyword>
<evidence type="ECO:0000255" key="1"/>
<evidence type="ECO:0000255" key="2">
    <source>
        <dbReference type="PROSITE-ProRule" id="PRU10088"/>
    </source>
</evidence>
<evidence type="ECO:0000255" key="3">
    <source>
        <dbReference type="PROSITE-ProRule" id="PRU10089"/>
    </source>
</evidence>
<evidence type="ECO:0000255" key="4">
    <source>
        <dbReference type="PROSITE-ProRule" id="PRU10090"/>
    </source>
</evidence>
<evidence type="ECO:0000269" key="5">
    <source>
    </source>
</evidence>
<evidence type="ECO:0000269" key="6">
    <source>
    </source>
</evidence>
<evidence type="ECO:0000269" key="7">
    <source>
    </source>
</evidence>
<evidence type="ECO:0000269" key="8">
    <source>
    </source>
</evidence>
<evidence type="ECO:0000305" key="9"/>
<evidence type="ECO:0007744" key="10">
    <source>
        <dbReference type="PDB" id="1GEC"/>
    </source>
</evidence>
<evidence type="ECO:0007829" key="11">
    <source>
        <dbReference type="PDB" id="1GEC"/>
    </source>
</evidence>
<feature type="signal peptide" evidence="1">
    <location>
        <begin position="1"/>
        <end position="18"/>
    </location>
</feature>
<feature type="propeptide" id="PRO_0000026412" description="Activation peptide" evidence="6 7">
    <location>
        <begin position="19"/>
        <end position="132"/>
    </location>
</feature>
<feature type="chain" id="PRO_0000026413" description="Papaya proteinase 4">
    <location>
        <begin position="133"/>
        <end position="348"/>
    </location>
</feature>
<feature type="active site" evidence="2">
    <location>
        <position position="157"/>
    </location>
</feature>
<feature type="active site" evidence="3">
    <location>
        <position position="291"/>
    </location>
</feature>
<feature type="active site" evidence="4">
    <location>
        <position position="311"/>
    </location>
</feature>
<feature type="disulfide bond" evidence="8 10">
    <location>
        <begin position="154"/>
        <end position="195"/>
    </location>
</feature>
<feature type="disulfide bond" evidence="8 10">
    <location>
        <begin position="188"/>
        <end position="227"/>
    </location>
</feature>
<feature type="disulfide bond" evidence="8 10">
    <location>
        <begin position="285"/>
        <end position="336"/>
    </location>
</feature>
<feature type="sequence conflict" description="In Ref. 2; AA sequence." evidence="9" ref="2">
    <original>K</original>
    <variation>L</variation>
    <location>
        <position position="190"/>
    </location>
</feature>
<feature type="turn" evidence="11">
    <location>
        <begin position="139"/>
        <end position="143"/>
    </location>
</feature>
<feature type="strand" evidence="11">
    <location>
        <begin position="153"/>
        <end position="155"/>
    </location>
</feature>
<feature type="helix" evidence="11">
    <location>
        <begin position="157"/>
        <end position="174"/>
    </location>
</feature>
<feature type="helix" evidence="11">
    <location>
        <begin position="182"/>
        <end position="188"/>
    </location>
</feature>
<feature type="strand" evidence="11">
    <location>
        <begin position="190"/>
        <end position="192"/>
    </location>
</feature>
<feature type="helix" evidence="11">
    <location>
        <begin position="200"/>
        <end position="210"/>
    </location>
</feature>
<feature type="turn" evidence="11">
    <location>
        <begin position="215"/>
        <end position="217"/>
    </location>
</feature>
<feature type="helix" evidence="11">
    <location>
        <begin position="229"/>
        <end position="232"/>
    </location>
</feature>
<feature type="strand" evidence="11">
    <location>
        <begin position="241"/>
        <end position="244"/>
    </location>
</feature>
<feature type="helix" evidence="11">
    <location>
        <begin position="250"/>
        <end position="257"/>
    </location>
</feature>
<feature type="strand" evidence="11">
    <location>
        <begin position="262"/>
        <end position="266"/>
    </location>
</feature>
<feature type="helix" evidence="11">
    <location>
        <begin position="271"/>
        <end position="274"/>
    </location>
</feature>
<feature type="strand" evidence="11">
    <location>
        <begin position="278"/>
        <end position="281"/>
    </location>
</feature>
<feature type="strand" evidence="11">
    <location>
        <begin position="291"/>
        <end position="301"/>
    </location>
</feature>
<feature type="strand" evidence="11">
    <location>
        <begin position="304"/>
        <end position="310"/>
    </location>
</feature>
<feature type="strand" evidence="11">
    <location>
        <begin position="322"/>
        <end position="326"/>
    </location>
</feature>
<feature type="helix" evidence="11">
    <location>
        <begin position="335"/>
        <end position="337"/>
    </location>
</feature>
<feature type="strand" evidence="11">
    <location>
        <begin position="343"/>
        <end position="346"/>
    </location>
</feature>
<dbReference type="EC" id="3.4.22.25" evidence="5"/>
<dbReference type="EMBL" id="X78056">
    <property type="protein sequence ID" value="CAA54974.1"/>
    <property type="molecule type" value="mRNA"/>
</dbReference>
<dbReference type="EMBL" id="X03970">
    <property type="protein sequence ID" value="CAA27608.1"/>
    <property type="molecule type" value="mRNA"/>
</dbReference>
<dbReference type="PIR" id="S06837">
    <property type="entry name" value="S06837"/>
</dbReference>
<dbReference type="PIR" id="T09798">
    <property type="entry name" value="T09798"/>
</dbReference>
<dbReference type="PDB" id="1GEC">
    <property type="method" value="X-ray"/>
    <property type="resolution" value="2.10 A"/>
    <property type="chains" value="E=133-348"/>
</dbReference>
<dbReference type="PDBsum" id="1GEC"/>
<dbReference type="SMR" id="P05994"/>
<dbReference type="Allergome" id="1539">
    <property type="allergen name" value="Cari p Endoproteinase"/>
</dbReference>
<dbReference type="MEROPS" id="C01.004"/>
<dbReference type="MEROPS" id="I29.003"/>
<dbReference type="KEGG" id="ag:CAA54974"/>
<dbReference type="BRENDA" id="3.4.22.25">
    <property type="organism ID" value="1191"/>
</dbReference>
<dbReference type="SABIO-RK" id="P05994"/>
<dbReference type="EvolutionaryTrace" id="P05994"/>
<dbReference type="GO" id="GO:0008234">
    <property type="term" value="F:cysteine-type peptidase activity"/>
    <property type="evidence" value="ECO:0007669"/>
    <property type="project" value="UniProtKB-KW"/>
</dbReference>
<dbReference type="GO" id="GO:0006508">
    <property type="term" value="P:proteolysis"/>
    <property type="evidence" value="ECO:0007669"/>
    <property type="project" value="UniProtKB-KW"/>
</dbReference>
<dbReference type="CDD" id="cd02248">
    <property type="entry name" value="Peptidase_C1A"/>
    <property type="match status" value="1"/>
</dbReference>
<dbReference type="FunFam" id="3.90.70.10:FF:000204">
    <property type="entry name" value="Papain"/>
    <property type="match status" value="1"/>
</dbReference>
<dbReference type="Gene3D" id="3.90.70.10">
    <property type="entry name" value="Cysteine proteinases"/>
    <property type="match status" value="1"/>
</dbReference>
<dbReference type="InterPro" id="IPR038765">
    <property type="entry name" value="Papain-like_cys_pep_sf"/>
</dbReference>
<dbReference type="InterPro" id="IPR025661">
    <property type="entry name" value="Pept_asp_AS"/>
</dbReference>
<dbReference type="InterPro" id="IPR000169">
    <property type="entry name" value="Pept_cys_AS"/>
</dbReference>
<dbReference type="InterPro" id="IPR025660">
    <property type="entry name" value="Pept_his_AS"/>
</dbReference>
<dbReference type="InterPro" id="IPR013128">
    <property type="entry name" value="Peptidase_C1A"/>
</dbReference>
<dbReference type="InterPro" id="IPR000668">
    <property type="entry name" value="Peptidase_C1A_C"/>
</dbReference>
<dbReference type="InterPro" id="IPR039417">
    <property type="entry name" value="Peptidase_C1A_papain-like"/>
</dbReference>
<dbReference type="InterPro" id="IPR013201">
    <property type="entry name" value="Prot_inhib_I29"/>
</dbReference>
<dbReference type="PANTHER" id="PTHR12411">
    <property type="entry name" value="CYSTEINE PROTEASE FAMILY C1-RELATED"/>
    <property type="match status" value="1"/>
</dbReference>
<dbReference type="Pfam" id="PF08246">
    <property type="entry name" value="Inhibitor_I29"/>
    <property type="match status" value="1"/>
</dbReference>
<dbReference type="Pfam" id="PF00112">
    <property type="entry name" value="Peptidase_C1"/>
    <property type="match status" value="1"/>
</dbReference>
<dbReference type="PRINTS" id="PR00705">
    <property type="entry name" value="PAPAIN"/>
</dbReference>
<dbReference type="SMART" id="SM00848">
    <property type="entry name" value="Inhibitor_I29"/>
    <property type="match status" value="1"/>
</dbReference>
<dbReference type="SMART" id="SM00645">
    <property type="entry name" value="Pept_C1"/>
    <property type="match status" value="1"/>
</dbReference>
<dbReference type="SUPFAM" id="SSF54001">
    <property type="entry name" value="Cysteine proteinases"/>
    <property type="match status" value="1"/>
</dbReference>
<dbReference type="PROSITE" id="PS00640">
    <property type="entry name" value="THIOL_PROTEASE_ASN"/>
    <property type="match status" value="1"/>
</dbReference>
<dbReference type="PROSITE" id="PS00139">
    <property type="entry name" value="THIOL_PROTEASE_CYS"/>
    <property type="match status" value="1"/>
</dbReference>
<dbReference type="PROSITE" id="PS00639">
    <property type="entry name" value="THIOL_PROTEASE_HIS"/>
    <property type="match status" value="1"/>
</dbReference>
<proteinExistence type="evidence at protein level"/>
<accession>P05994</accession>
<name>PAPA4_CARPA</name>